<reference key="1">
    <citation type="journal article" date="2003" name="Proc. Natl. Acad. Sci. U.S.A.">
        <title>Complete genome sequence of Lactobacillus plantarum WCFS1.</title>
        <authorList>
            <person name="Kleerebezem M."/>
            <person name="Boekhorst J."/>
            <person name="van Kranenburg R."/>
            <person name="Molenaar D."/>
            <person name="Kuipers O.P."/>
            <person name="Leer R."/>
            <person name="Tarchini R."/>
            <person name="Peters S.A."/>
            <person name="Sandbrink H.M."/>
            <person name="Fiers M.W.E.J."/>
            <person name="Stiekema W."/>
            <person name="Klein Lankhorst R.M."/>
            <person name="Bron P.A."/>
            <person name="Hoffer S.M."/>
            <person name="Nierop Groot M.N."/>
            <person name="Kerkhoven R."/>
            <person name="De Vries M."/>
            <person name="Ursing B."/>
            <person name="De Vos W.M."/>
            <person name="Siezen R.J."/>
        </authorList>
    </citation>
    <scope>NUCLEOTIDE SEQUENCE [LARGE SCALE GENOMIC DNA]</scope>
    <source>
        <strain>ATCC BAA-793 / NCIMB 8826 / WCFS1</strain>
    </source>
</reference>
<reference key="2">
    <citation type="journal article" date="2012" name="J. Bacteriol.">
        <title>Complete resequencing and reannotation of the Lactobacillus plantarum WCFS1 genome.</title>
        <authorList>
            <person name="Siezen R.J."/>
            <person name="Francke C."/>
            <person name="Renckens B."/>
            <person name="Boekhorst J."/>
            <person name="Wels M."/>
            <person name="Kleerebezem M."/>
            <person name="van Hijum S.A."/>
        </authorList>
    </citation>
    <scope>NUCLEOTIDE SEQUENCE [LARGE SCALE GENOMIC DNA]</scope>
    <scope>GENOME REANNOTATION</scope>
    <source>
        <strain>ATCC BAA-793 / NCIMB 8826 / WCFS1</strain>
    </source>
</reference>
<feature type="chain" id="PRO_0000203988" description="UPF0246 protein lp_0089">
    <location>
        <begin position="1"/>
        <end position="248"/>
    </location>
</feature>
<keyword id="KW-1185">Reference proteome</keyword>
<accession>Q890D7</accession>
<accession>F9USR9</accession>
<organism>
    <name type="scientific">Lactiplantibacillus plantarum (strain ATCC BAA-793 / NCIMB 8826 / WCFS1)</name>
    <name type="common">Lactobacillus plantarum</name>
    <dbReference type="NCBI Taxonomy" id="220668"/>
    <lineage>
        <taxon>Bacteria</taxon>
        <taxon>Bacillati</taxon>
        <taxon>Bacillota</taxon>
        <taxon>Bacilli</taxon>
        <taxon>Lactobacillales</taxon>
        <taxon>Lactobacillaceae</taxon>
        <taxon>Lactiplantibacillus</taxon>
    </lineage>
</organism>
<gene>
    <name type="ordered locus">lp_0089</name>
</gene>
<evidence type="ECO:0000255" key="1">
    <source>
        <dbReference type="HAMAP-Rule" id="MF_00652"/>
    </source>
</evidence>
<comment type="similarity">
    <text evidence="1">Belongs to the UPF0246 family.</text>
</comment>
<sequence length="248" mass="28577">MKIIIAPAKKMIIDQDAFPALTEPIYLDQTQQLLAQLQHLTYPEAKTLWHCSDKLAQPNYDWLQKIDLTRNLTPAILSYSGIQYRYMAPDVFTQPALDYIQANLRILSGFYGILRPFDGIVPYRLEMQARLAVGQAKNLYAFWGDRLYQALTPRPEPIINLASQEYAKTIAPYLAPHQSMIDIVFASFIDGKLKTKATLARMARGAMVRFLAEHQIDDVTAIRTFDHPDYQFDEKRSTANRFVFIYQH</sequence>
<dbReference type="EMBL" id="AL935263">
    <property type="protein sequence ID" value="CCC77650.1"/>
    <property type="molecule type" value="Genomic_DNA"/>
</dbReference>
<dbReference type="RefSeq" id="WP_011100877.1">
    <property type="nucleotide sequence ID" value="NC_004567.2"/>
</dbReference>
<dbReference type="RefSeq" id="YP_004888164.1">
    <property type="nucleotide sequence ID" value="NC_004567.2"/>
</dbReference>
<dbReference type="SMR" id="Q890D7"/>
<dbReference type="STRING" id="220668.lp_0089"/>
<dbReference type="EnsemblBacteria" id="CCC77650">
    <property type="protein sequence ID" value="CCC77650"/>
    <property type="gene ID" value="lp_0089"/>
</dbReference>
<dbReference type="KEGG" id="lpl:lp_0089"/>
<dbReference type="PATRIC" id="fig|220668.9.peg.73"/>
<dbReference type="eggNOG" id="COG3022">
    <property type="taxonomic scope" value="Bacteria"/>
</dbReference>
<dbReference type="HOGENOM" id="CLU_061989_1_0_9"/>
<dbReference type="OrthoDB" id="9777133at2"/>
<dbReference type="PhylomeDB" id="Q890D7"/>
<dbReference type="Proteomes" id="UP000000432">
    <property type="component" value="Chromosome"/>
</dbReference>
<dbReference type="GO" id="GO:0005829">
    <property type="term" value="C:cytosol"/>
    <property type="evidence" value="ECO:0007669"/>
    <property type="project" value="TreeGrafter"/>
</dbReference>
<dbReference type="GO" id="GO:0033194">
    <property type="term" value="P:response to hydroperoxide"/>
    <property type="evidence" value="ECO:0007669"/>
    <property type="project" value="TreeGrafter"/>
</dbReference>
<dbReference type="HAMAP" id="MF_00652">
    <property type="entry name" value="UPF0246"/>
    <property type="match status" value="1"/>
</dbReference>
<dbReference type="InterPro" id="IPR005583">
    <property type="entry name" value="YaaA"/>
</dbReference>
<dbReference type="NCBIfam" id="NF002543">
    <property type="entry name" value="PRK02101.1-4"/>
    <property type="match status" value="1"/>
</dbReference>
<dbReference type="PANTHER" id="PTHR30283:SF4">
    <property type="entry name" value="PEROXIDE STRESS RESISTANCE PROTEIN YAAA"/>
    <property type="match status" value="1"/>
</dbReference>
<dbReference type="PANTHER" id="PTHR30283">
    <property type="entry name" value="PEROXIDE STRESS RESPONSE PROTEIN YAAA"/>
    <property type="match status" value="1"/>
</dbReference>
<dbReference type="Pfam" id="PF03883">
    <property type="entry name" value="H2O2_YaaD"/>
    <property type="match status" value="1"/>
</dbReference>
<name>Y089_LACPL</name>
<proteinExistence type="inferred from homology"/>
<protein>
    <recommendedName>
        <fullName evidence="1">UPF0246 protein lp_0089</fullName>
    </recommendedName>
</protein>